<keyword id="KW-0678">Repressor</keyword>
<keyword id="KW-0687">Ribonucleoprotein</keyword>
<keyword id="KW-0689">Ribosomal protein</keyword>
<keyword id="KW-0694">RNA-binding</keyword>
<keyword id="KW-0699">rRNA-binding</keyword>
<keyword id="KW-0810">Translation regulation</keyword>
<keyword id="KW-0820">tRNA-binding</keyword>
<protein>
    <recommendedName>
        <fullName evidence="1">Large ribosomal subunit protein uL1</fullName>
    </recommendedName>
    <alternativeName>
        <fullName evidence="2">50S ribosomal protein L1</fullName>
    </alternativeName>
</protein>
<evidence type="ECO:0000255" key="1">
    <source>
        <dbReference type="HAMAP-Rule" id="MF_01318"/>
    </source>
</evidence>
<evidence type="ECO:0000305" key="2"/>
<gene>
    <name evidence="1" type="primary">rpl1</name>
    <name type="ordered locus">Mbar_A0614</name>
</gene>
<dbReference type="EMBL" id="CP000099">
    <property type="protein sequence ID" value="AAZ69594.1"/>
    <property type="molecule type" value="Genomic_DNA"/>
</dbReference>
<dbReference type="SMR" id="Q46EU8"/>
<dbReference type="STRING" id="269797.Mbar_A0614"/>
<dbReference type="PaxDb" id="269797-Mbar_A0614"/>
<dbReference type="KEGG" id="mba:Mbar_A0614"/>
<dbReference type="eggNOG" id="arCOG04289">
    <property type="taxonomic scope" value="Archaea"/>
</dbReference>
<dbReference type="HOGENOM" id="CLU_062853_4_0_2"/>
<dbReference type="OrthoDB" id="10382at2157"/>
<dbReference type="GO" id="GO:0015934">
    <property type="term" value="C:large ribosomal subunit"/>
    <property type="evidence" value="ECO:0007669"/>
    <property type="project" value="InterPro"/>
</dbReference>
<dbReference type="GO" id="GO:0019843">
    <property type="term" value="F:rRNA binding"/>
    <property type="evidence" value="ECO:0007669"/>
    <property type="project" value="UniProtKB-UniRule"/>
</dbReference>
<dbReference type="GO" id="GO:0003735">
    <property type="term" value="F:structural constituent of ribosome"/>
    <property type="evidence" value="ECO:0007669"/>
    <property type="project" value="InterPro"/>
</dbReference>
<dbReference type="GO" id="GO:0000049">
    <property type="term" value="F:tRNA binding"/>
    <property type="evidence" value="ECO:0007669"/>
    <property type="project" value="UniProtKB-KW"/>
</dbReference>
<dbReference type="GO" id="GO:0006417">
    <property type="term" value="P:regulation of translation"/>
    <property type="evidence" value="ECO:0007669"/>
    <property type="project" value="UniProtKB-KW"/>
</dbReference>
<dbReference type="GO" id="GO:0006412">
    <property type="term" value="P:translation"/>
    <property type="evidence" value="ECO:0007669"/>
    <property type="project" value="UniProtKB-UniRule"/>
</dbReference>
<dbReference type="CDD" id="cd00403">
    <property type="entry name" value="Ribosomal_L1"/>
    <property type="match status" value="1"/>
</dbReference>
<dbReference type="FunFam" id="3.40.50.790:FF:000005">
    <property type="entry name" value="50S ribosomal protein L1"/>
    <property type="match status" value="1"/>
</dbReference>
<dbReference type="Gene3D" id="3.30.190.20">
    <property type="match status" value="1"/>
</dbReference>
<dbReference type="Gene3D" id="3.40.50.790">
    <property type="match status" value="1"/>
</dbReference>
<dbReference type="HAMAP" id="MF_01318_A">
    <property type="entry name" value="Ribosomal_uL1_A"/>
    <property type="match status" value="1"/>
</dbReference>
<dbReference type="InterPro" id="IPR002143">
    <property type="entry name" value="Ribosomal_uL1"/>
</dbReference>
<dbReference type="InterPro" id="IPR023674">
    <property type="entry name" value="Ribosomal_uL1-like"/>
</dbReference>
<dbReference type="InterPro" id="IPR028364">
    <property type="entry name" value="Ribosomal_uL1/biogenesis"/>
</dbReference>
<dbReference type="InterPro" id="IPR016095">
    <property type="entry name" value="Ribosomal_uL1_3-a/b-sand"/>
</dbReference>
<dbReference type="InterPro" id="IPR023669">
    <property type="entry name" value="Ribosomal_uL1_arc"/>
</dbReference>
<dbReference type="InterPro" id="IPR023673">
    <property type="entry name" value="Ribosomal_uL1_CS"/>
</dbReference>
<dbReference type="NCBIfam" id="NF003244">
    <property type="entry name" value="PRK04203.1"/>
    <property type="match status" value="1"/>
</dbReference>
<dbReference type="PANTHER" id="PTHR36427">
    <property type="entry name" value="54S RIBOSOMAL PROTEIN L1, MITOCHONDRIAL"/>
    <property type="match status" value="1"/>
</dbReference>
<dbReference type="PANTHER" id="PTHR36427:SF3">
    <property type="entry name" value="LARGE RIBOSOMAL SUBUNIT PROTEIN UL1M"/>
    <property type="match status" value="1"/>
</dbReference>
<dbReference type="Pfam" id="PF00687">
    <property type="entry name" value="Ribosomal_L1"/>
    <property type="match status" value="1"/>
</dbReference>
<dbReference type="PIRSF" id="PIRSF002155">
    <property type="entry name" value="Ribosomal_L1"/>
    <property type="match status" value="1"/>
</dbReference>
<dbReference type="SUPFAM" id="SSF56808">
    <property type="entry name" value="Ribosomal protein L1"/>
    <property type="match status" value="1"/>
</dbReference>
<dbReference type="PROSITE" id="PS01199">
    <property type="entry name" value="RIBOSOMAL_L1"/>
    <property type="match status" value="1"/>
</dbReference>
<comment type="function">
    <text evidence="1">Binds directly to 23S rRNA. Probably involved in E site tRNA release.</text>
</comment>
<comment type="function">
    <text evidence="1">Protein L1 is also a translational repressor protein, it controls the translation of its operon by binding to its mRNA.</text>
</comment>
<comment type="subunit">
    <text evidence="1">Part of the 50S ribosomal subunit.</text>
</comment>
<comment type="similarity">
    <text evidence="1">Belongs to the universal ribosomal protein uL1 family.</text>
</comment>
<proteinExistence type="inferred from homology"/>
<sequence length="213" mass="23592">MAEKSILEAVKKVLEESPKRNFSESVDLAINLKNLDMNLPKNRVDEEVILPHGLGKELKIGVFAKGDVGLRAKAAGAAYVISDVELDELASDKTRARTLANECDLFIAETQFMPTIGKNLGIVLGPRGKMPIPLLPNKDIGELIQSKQNAIRLRSKDKLTFHVPVGRRTMSPDDLAENVEIIVSRLERVLDKGRHNLRTVYVTTTMGKSERVV</sequence>
<organism>
    <name type="scientific">Methanosarcina barkeri (strain Fusaro / DSM 804)</name>
    <dbReference type="NCBI Taxonomy" id="269797"/>
    <lineage>
        <taxon>Archaea</taxon>
        <taxon>Methanobacteriati</taxon>
        <taxon>Methanobacteriota</taxon>
        <taxon>Stenosarchaea group</taxon>
        <taxon>Methanomicrobia</taxon>
        <taxon>Methanosarcinales</taxon>
        <taxon>Methanosarcinaceae</taxon>
        <taxon>Methanosarcina</taxon>
    </lineage>
</organism>
<name>RL1_METBF</name>
<reference key="1">
    <citation type="journal article" date="2006" name="J. Bacteriol.">
        <title>The Methanosarcina barkeri genome: comparative analysis with Methanosarcina acetivorans and Methanosarcina mazei reveals extensive rearrangement within methanosarcinal genomes.</title>
        <authorList>
            <person name="Maeder D.L."/>
            <person name="Anderson I."/>
            <person name="Brettin T.S."/>
            <person name="Bruce D.C."/>
            <person name="Gilna P."/>
            <person name="Han C.S."/>
            <person name="Lapidus A."/>
            <person name="Metcalf W.W."/>
            <person name="Saunders E."/>
            <person name="Tapia R."/>
            <person name="Sowers K.R."/>
        </authorList>
    </citation>
    <scope>NUCLEOTIDE SEQUENCE [LARGE SCALE GENOMIC DNA]</scope>
    <source>
        <strain>Fusaro / DSM 804</strain>
    </source>
</reference>
<accession>Q46EU8</accession>
<feature type="chain" id="PRO_0000230653" description="Large ribosomal subunit protein uL1">
    <location>
        <begin position="1"/>
        <end position="213"/>
    </location>
</feature>